<dbReference type="EMBL" id="AF385823">
    <property type="protein sequence ID" value="AAO20043.1"/>
    <property type="molecule type" value="mRNA"/>
</dbReference>
<dbReference type="SMR" id="Q804X9"/>
<dbReference type="STRING" id="8049.ENSGMOP00000017916"/>
<dbReference type="GlyCosmos" id="Q804X9">
    <property type="glycosylation" value="1 site, No reported glycans"/>
</dbReference>
<dbReference type="Proteomes" id="UP000694546">
    <property type="component" value="Unplaced"/>
</dbReference>
<dbReference type="GO" id="GO:0005886">
    <property type="term" value="C:plasma membrane"/>
    <property type="evidence" value="ECO:0000250"/>
    <property type="project" value="UniProtKB"/>
</dbReference>
<dbReference type="GO" id="GO:0004930">
    <property type="term" value="F:G protein-coupled receptor activity"/>
    <property type="evidence" value="ECO:0007669"/>
    <property type="project" value="UniProtKB-KW"/>
</dbReference>
<dbReference type="GO" id="GO:0009881">
    <property type="term" value="F:photoreceptor activity"/>
    <property type="evidence" value="ECO:0007669"/>
    <property type="project" value="UniProtKB-KW"/>
</dbReference>
<dbReference type="GO" id="GO:0007602">
    <property type="term" value="P:phototransduction"/>
    <property type="evidence" value="ECO:0007669"/>
    <property type="project" value="UniProtKB-KW"/>
</dbReference>
<dbReference type="GO" id="GO:0007601">
    <property type="term" value="P:visual perception"/>
    <property type="evidence" value="ECO:0007669"/>
    <property type="project" value="InterPro"/>
</dbReference>
<dbReference type="CDD" id="cd15336">
    <property type="entry name" value="7tmA_Melanopsin"/>
    <property type="match status" value="1"/>
</dbReference>
<dbReference type="FunFam" id="1.20.1070.10:FF:000044">
    <property type="entry name" value="Opsin, ultraviolet-sensitive"/>
    <property type="match status" value="1"/>
</dbReference>
<dbReference type="Gene3D" id="1.20.1070.10">
    <property type="entry name" value="Rhodopsin 7-helix transmembrane proteins"/>
    <property type="match status" value="1"/>
</dbReference>
<dbReference type="InterPro" id="IPR050125">
    <property type="entry name" value="GPCR_opsins"/>
</dbReference>
<dbReference type="InterPro" id="IPR000276">
    <property type="entry name" value="GPCR_Rhodpsn"/>
</dbReference>
<dbReference type="InterPro" id="IPR017452">
    <property type="entry name" value="GPCR_Rhodpsn_7TM"/>
</dbReference>
<dbReference type="InterPro" id="IPR001760">
    <property type="entry name" value="Opsin"/>
</dbReference>
<dbReference type="InterPro" id="IPR027430">
    <property type="entry name" value="Retinal_BS"/>
</dbReference>
<dbReference type="PANTHER" id="PTHR24240">
    <property type="entry name" value="OPSIN"/>
    <property type="match status" value="1"/>
</dbReference>
<dbReference type="Pfam" id="PF00001">
    <property type="entry name" value="7tm_1"/>
    <property type="match status" value="1"/>
</dbReference>
<dbReference type="PRINTS" id="PR00237">
    <property type="entry name" value="GPCRRHODOPSN"/>
</dbReference>
<dbReference type="PRINTS" id="PR00238">
    <property type="entry name" value="OPSIN"/>
</dbReference>
<dbReference type="SMART" id="SM01381">
    <property type="entry name" value="7TM_GPCR_Srsx"/>
    <property type="match status" value="1"/>
</dbReference>
<dbReference type="SUPFAM" id="SSF81321">
    <property type="entry name" value="Family A G protein-coupled receptor-like"/>
    <property type="match status" value="1"/>
</dbReference>
<dbReference type="PROSITE" id="PS00237">
    <property type="entry name" value="G_PROTEIN_RECEP_F1_1"/>
    <property type="match status" value="2"/>
</dbReference>
<dbReference type="PROSITE" id="PS50262">
    <property type="entry name" value="G_PROTEIN_RECEP_F1_2"/>
    <property type="match status" value="1"/>
</dbReference>
<dbReference type="PROSITE" id="PS00238">
    <property type="entry name" value="OPSIN"/>
    <property type="match status" value="1"/>
</dbReference>
<feature type="chain" id="PRO_0000270990" description="Melanopsin-A">
    <location>
        <begin position="1"/>
        <end position="561"/>
    </location>
</feature>
<feature type="topological domain" description="Extracellular" evidence="3">
    <location>
        <begin position="1"/>
        <end position="34"/>
    </location>
</feature>
<feature type="transmembrane region" description="Helical; Name=1" evidence="3">
    <location>
        <begin position="35"/>
        <end position="55"/>
    </location>
</feature>
<feature type="topological domain" description="Cytoplasmic" evidence="3">
    <location>
        <begin position="56"/>
        <end position="68"/>
    </location>
</feature>
<feature type="transmembrane region" description="Helical; Name=2" evidence="3">
    <location>
        <begin position="69"/>
        <end position="89"/>
    </location>
</feature>
<feature type="topological domain" description="Extracellular" evidence="3">
    <location>
        <begin position="90"/>
        <end position="104"/>
    </location>
</feature>
<feature type="transmembrane region" description="Helical; Name=3" evidence="3">
    <location>
        <begin position="105"/>
        <end position="125"/>
    </location>
</feature>
<feature type="topological domain" description="Cytoplasmic" evidence="3">
    <location>
        <begin position="126"/>
        <end position="148"/>
    </location>
</feature>
<feature type="transmembrane region" description="Helical; Name=4" evidence="3">
    <location>
        <begin position="149"/>
        <end position="169"/>
    </location>
</feature>
<feature type="topological domain" description="Extracellular" evidence="3">
    <location>
        <begin position="170"/>
        <end position="201"/>
    </location>
</feature>
<feature type="transmembrane region" description="Helical; Name=5" evidence="3">
    <location>
        <begin position="202"/>
        <end position="222"/>
    </location>
</feature>
<feature type="topological domain" description="Cytoplasmic" evidence="3">
    <location>
        <begin position="223"/>
        <end position="255"/>
    </location>
</feature>
<feature type="transmembrane region" description="Helical; Name=6" evidence="3">
    <location>
        <begin position="256"/>
        <end position="276"/>
    </location>
</feature>
<feature type="topological domain" description="Extracellular" evidence="3">
    <location>
        <begin position="277"/>
        <end position="291"/>
    </location>
</feature>
<feature type="transmembrane region" description="Helical; Name=7" evidence="3">
    <location>
        <begin position="292"/>
        <end position="312"/>
    </location>
</feature>
<feature type="topological domain" description="Cytoplasmic" evidence="3">
    <location>
        <begin position="313"/>
        <end position="561"/>
    </location>
</feature>
<feature type="region of interest" description="Disordered" evidence="5">
    <location>
        <begin position="359"/>
        <end position="385"/>
    </location>
</feature>
<feature type="region of interest" description="Disordered" evidence="5">
    <location>
        <begin position="404"/>
        <end position="448"/>
    </location>
</feature>
<feature type="region of interest" description="Disordered" evidence="5">
    <location>
        <begin position="479"/>
        <end position="503"/>
    </location>
</feature>
<feature type="region of interest" description="Disordered" evidence="5">
    <location>
        <begin position="539"/>
        <end position="561"/>
    </location>
</feature>
<feature type="compositionally biased region" description="Low complexity" evidence="5">
    <location>
        <begin position="371"/>
        <end position="385"/>
    </location>
</feature>
<feature type="compositionally biased region" description="Acidic residues" evidence="5">
    <location>
        <begin position="550"/>
        <end position="561"/>
    </location>
</feature>
<feature type="modified residue" description="N6-(retinylidene)lysine" evidence="1">
    <location>
        <position position="299"/>
    </location>
</feature>
<feature type="glycosylation site" description="N-linked (GlcNAc...) asparagine" evidence="3">
    <location>
        <position position="192"/>
    </location>
</feature>
<feature type="disulfide bond" evidence="4">
    <location>
        <begin position="103"/>
        <end position="181"/>
    </location>
</feature>
<protein>
    <recommendedName>
        <fullName>Melanopsin-A</fullName>
    </recommendedName>
    <alternativeName>
        <fullName>Opsin-4A</fullName>
    </alternativeName>
</protein>
<name>OPN4A_GADMO</name>
<proteinExistence type="evidence at transcript level"/>
<evidence type="ECO:0000250" key="1"/>
<evidence type="ECO:0000250" key="2">
    <source>
        <dbReference type="UniProtKB" id="Q9QXZ9"/>
    </source>
</evidence>
<evidence type="ECO:0000255" key="3"/>
<evidence type="ECO:0000255" key="4">
    <source>
        <dbReference type="PROSITE-ProRule" id="PRU00521"/>
    </source>
</evidence>
<evidence type="ECO:0000256" key="5">
    <source>
        <dbReference type="SAM" id="MobiDB-lite"/>
    </source>
</evidence>
<evidence type="ECO:0000269" key="6">
    <source>
    </source>
</evidence>
<evidence type="ECO:0000305" key="7"/>
<evidence type="ECO:0000312" key="8">
    <source>
        <dbReference type="EMBL" id="AAO20043.1"/>
    </source>
</evidence>
<sequence length="561" mass="62650">MRPSTDTMEADTAATHRNFITKVDVPDHAHYTVAFFVSVIGTLGVTGNALVQFAFYSNKKLRNLPNYFIMNQAASDFLMAFTQSPFFFINCLNREWIFGELGCKLYAFLGALFGITSMINLLAISLDRYMVITRPLEAMKWNSKRRTTIAILLVWLYSLAWSLAPLVGWSSYIPEGLRTSCTWDYVTYTASNRSYTMMLCCFVFFIPLAIISYCYLFMFLAIRKTSRDVERLGIQVRKSTIIRQKSIRTEWKLAKIAFVVIVVYVLSWSPYACVTMISWSGHANILSPYSKTVPAVIAKASTIYNPFIYAIIHQKYRKTLADKVPCLRFLAPNKRKDCTSSSFSGSSYRDSVISRTSTAIRRQSTAASRHASASKTAAGASSYSSSDRVFGDVEMDPIDWRSGASFRRHSSRGSTRRDRLLKKQQMERTNKSAAHKQPSPSTKMSATHCKNKTVSSSVNMAAAPPQLVLIRKRSQSLTNGLSDAGKKTTVANGTPGNHKSKSADLHFRNLPALDQALNVPRIIVISPTSEDCLVKHESSFTDDGSVGTVVDEDSLEDNDVV</sequence>
<organism>
    <name type="scientific">Gadus morhua</name>
    <name type="common">Atlantic cod</name>
    <dbReference type="NCBI Taxonomy" id="8049"/>
    <lineage>
        <taxon>Eukaryota</taxon>
        <taxon>Metazoa</taxon>
        <taxon>Chordata</taxon>
        <taxon>Craniata</taxon>
        <taxon>Vertebrata</taxon>
        <taxon>Euteleostomi</taxon>
        <taxon>Actinopterygii</taxon>
        <taxon>Neopterygii</taxon>
        <taxon>Teleostei</taxon>
        <taxon>Neoteleostei</taxon>
        <taxon>Acanthomorphata</taxon>
        <taxon>Zeiogadaria</taxon>
        <taxon>Gadariae</taxon>
        <taxon>Gadiformes</taxon>
        <taxon>Gadoidei</taxon>
        <taxon>Gadidae</taxon>
        <taxon>Gadus</taxon>
    </lineage>
</organism>
<reference evidence="7 8" key="1">
    <citation type="journal article" date="2003" name="J. Comp. Neurol.">
        <title>Isolation and characterization of two teleost melanopsin genes and their differential expression within the inner retina and brain.</title>
        <authorList>
            <person name="Drivenes O."/>
            <person name="Soviknes A.M."/>
            <person name="Ebbesson L.O."/>
            <person name="Fjose A."/>
            <person name="Seo H.C."/>
            <person name="Helvik J.V."/>
        </authorList>
    </citation>
    <scope>NUCLEOTIDE SEQUENCE [MRNA]</scope>
    <scope>TISSUE SPECIFICITY</scope>
</reference>
<comment type="function">
    <text evidence="2">Photoreceptor implicated in non-image-forming responses to light.</text>
</comment>
<comment type="subcellular location">
    <subcellularLocation>
        <location evidence="2">Cell membrane</location>
        <topology evidence="3">Multi-pass membrane protein</topology>
    </subcellularLocation>
</comment>
<comment type="tissue specificity">
    <text evidence="6">Expressed in retina and brain. Expressed in a subset of retinal horizontal cells as well as a small number of amacrine and retinal ganglion cells. Also expressed in a small population of neurons in the suprachiasmatic nucleus (SNC).</text>
</comment>
<comment type="similarity">
    <text evidence="4">Belongs to the G-protein coupled receptor 1 family. Opsin subfamily.</text>
</comment>
<accession>Q804X9</accession>
<gene>
    <name type="primary">opn4a</name>
</gene>
<keyword id="KW-1003">Cell membrane</keyword>
<keyword id="KW-0157">Chromophore</keyword>
<keyword id="KW-1015">Disulfide bond</keyword>
<keyword id="KW-0297">G-protein coupled receptor</keyword>
<keyword id="KW-0325">Glycoprotein</keyword>
<keyword id="KW-0472">Membrane</keyword>
<keyword id="KW-0600">Photoreceptor protein</keyword>
<keyword id="KW-0675">Receptor</keyword>
<keyword id="KW-1185">Reference proteome</keyword>
<keyword id="KW-0681">Retinal protein</keyword>
<keyword id="KW-0716">Sensory transduction</keyword>
<keyword id="KW-0807">Transducer</keyword>
<keyword id="KW-0812">Transmembrane</keyword>
<keyword id="KW-1133">Transmembrane helix</keyword>